<comment type="function">
    <text evidence="1 5">Inhibits post-transcriptional processing of cellular pre-mRNA, by binding and inhibiting two cellular proteins that are required for the 3'-end processing of cellular pre-mRNAs: the 30 kDa cleavage and polyadenylation specificity factor/CPSF4 and the poly(A)-binding protein 2/PABPN1. In turn, unprocessed 3' end pre-mRNAs accumulate in the host nucleus and are no longer exported to the cytoplasm. Cellular protein synthesis is thereby shut off very early after virus infection. Viral protein synthesis is not affected by the inhibition of the cellular 3' end processing machinery because the poly(A) tails of viral mRNAs are produced by the viral polymerase through a stuttering mechanism. Prevents the establishment of the cellular antiviral state by inhibiting TRIM25-mediated RIGI ubiquitination, which normally triggers the antiviral transduction signal that leads to the activation of type I IFN genes by transcription factors IRF3 and IRF7. Also binds poly(A) and U6 snRNA. Inhibits the integrated stress response (ISR) in the infected cell by blocking dsRNA binding by EIF2AK2/PKR and further phosphorylation of EIF2S1/EIF-2ALPHA (PubMed:33766561). Stress granule formation is thus inhibited, which allows protein synthesis and viral replication (PubMed:33766561).</text>
</comment>
<comment type="subunit">
    <text evidence="1">Homodimer. Interacts with host TRIM25 (via coiled coil); this interaction specifically inhibits TRIM25 multimerization and TRIM25-mediated RIGI CARD ubiquitination. Interacts with human EIF2AK2/PKR, CPSF4, IVNS1ABP and PABPN1.</text>
</comment>
<comment type="interaction">
    <interactant intactId="EBI-2547442">
        <id>P03496</id>
    </interactant>
    <interactant intactId="EBI-2547442">
        <id>P03496</id>
        <label>NS</label>
    </interactant>
    <organismsDiffer>false</organismsDiffer>
    <experiments>4</experiments>
</comment>
<comment type="interaction">
    <interactant intactId="EBI-2547442">
        <id>P03496</id>
    </interactant>
    <interactant intactId="EBI-2462104">
        <id>P55265</id>
        <label>ADAR</label>
    </interactant>
    <organismsDiffer>true</organismsDiffer>
    <experiments>8</experiments>
</comment>
<comment type="interaction">
    <interactant intactId="EBI-2547442">
        <id>P03496</id>
    </interactant>
    <interactant intactId="EBI-78756">
        <id>Q12906</id>
        <label>ILF3</label>
    </interactant>
    <organismsDiffer>true</organismsDiffer>
    <experiments>3</experiments>
</comment>
<comment type="interaction">
    <interactant intactId="EBI-2547442">
        <id>P03496</id>
    </interactant>
    <interactant intactId="EBI-79464">
        <id>P27986</id>
        <label>PIK3R1</label>
    </interactant>
    <organismsDiffer>true</organismsDiffer>
    <experiments>6</experiments>
</comment>
<comment type="interaction">
    <interactant intactId="EBI-2547442">
        <id>P03496</id>
    </interactant>
    <interactant intactId="EBI-346930">
        <id>O00459</id>
        <label>PIK3R2</label>
    </interactant>
    <organismsDiffer>true</organismsDiffer>
    <experiments>13</experiments>
</comment>
<comment type="interaction">
    <interactant intactId="EBI-2547442">
        <id>P03496</id>
    </interactant>
    <interactant intactId="EBI-713955">
        <id>O75569</id>
        <label>PRKRA</label>
    </interactant>
    <organismsDiffer>true</organismsDiffer>
    <experiments>3</experiments>
</comment>
<comment type="interaction">
    <interactant intactId="EBI-2547442">
        <id>P03496</id>
    </interactant>
    <interactant intactId="EBI-358174">
        <id>O95793</id>
        <label>STAU1</label>
    </interactant>
    <organismsDiffer>true</organismsDiffer>
    <experiments>6</experiments>
</comment>
<comment type="interaction">
    <interactant intactId="EBI-2547442">
        <id>P03496</id>
    </interactant>
    <interactant intactId="EBI-2341129">
        <id>Q14258</id>
        <label>TRIM25</label>
    </interactant>
    <organismsDiffer>true</organismsDiffer>
    <experiments>3</experiments>
</comment>
<comment type="subcellular location">
    <subcellularLocation>
        <location evidence="1">Host nucleus</location>
    </subcellularLocation>
    <subcellularLocation>
        <location evidence="1">Host cytoplasm</location>
    </subcellularLocation>
    <text evidence="1">In uninfected, transfected cells, NS1 is localized in the nucleus. Only in virus infected cells, the nuclear export signal is unveiled, presumably by a viral protein, and a fraction of NS1 is exported in the cytoplasm.</text>
</comment>
<comment type="alternative products">
    <event type="alternative splicing"/>
    <isoform>
        <id>P03496-1</id>
        <name>NS1</name>
        <sequence type="displayed"/>
    </isoform>
    <isoform>
        <id>P03508-1</id>
        <name>NEP</name>
        <name>NS2</name>
        <sequence type="external"/>
    </isoform>
</comment>
<comment type="domain">
    <text evidence="1">The dsRNA-binding region is required for suppression of RNA silencing.</text>
</comment>
<comment type="PTM">
    <text evidence="1 4">Upon interferon induction, ISGylated via host HERC5; this results in the impairment of NS1 interaction with RNA targets due to its inability to form homodimers and to interact with host EIF2AK2/PKR. There are two ISGylated forms: one form is ISGylated at Lys-20, Lys-41, Lys-217, and Lys-219, and another one at Lys-108, Lys-110, and Lys-126, they represent band I and II respectively. Lys-126 and Lys-217 are critical for host antiviral response in vivo.</text>
</comment>
<comment type="similarity">
    <text>Belongs to the influenza A viruses NS1 family.</text>
</comment>
<proteinExistence type="evidence at protein level"/>
<evidence type="ECO:0000255" key="1">
    <source>
        <dbReference type="HAMAP-Rule" id="MF_04066"/>
    </source>
</evidence>
<evidence type="ECO:0000256" key="2">
    <source>
        <dbReference type="SAM" id="MobiDB-lite"/>
    </source>
</evidence>
<evidence type="ECO:0000269" key="3">
    <source>
    </source>
</evidence>
<evidence type="ECO:0000269" key="4">
    <source>
    </source>
</evidence>
<evidence type="ECO:0000269" key="5">
    <source>
    </source>
</evidence>
<evidence type="ECO:0007829" key="6">
    <source>
        <dbReference type="PDB" id="2ZKO"/>
    </source>
</evidence>
<evidence type="ECO:0007829" key="7">
    <source>
        <dbReference type="PDB" id="3RVC"/>
    </source>
</evidence>
<protein>
    <recommendedName>
        <fullName evidence="1">Non-structural protein 1</fullName>
        <shortName evidence="1">NS1</shortName>
    </recommendedName>
    <alternativeName>
        <fullName evidence="1">NS1A</fullName>
    </alternativeName>
</protein>
<reference key="1">
    <citation type="journal article" date="1980" name="Nucleic Acids Res.">
        <title>Complete nucleotide sequence of the influenza A/PR/8/34 virus NS gene and comparison with the NS genes of the A/Udorn/72 and A/FPV/Rostock/34 strains.</title>
        <authorList>
            <person name="Baez M."/>
            <person name="Taussig R."/>
            <person name="Zazra J.J."/>
            <person name="Young J.F."/>
            <person name="Palese P."/>
            <person name="Reisfeld A."/>
            <person name="Skalka A.M."/>
        </authorList>
    </citation>
    <scope>NUCLEOTIDE SEQUENCE [GENOMIC RNA]</scope>
</reference>
<reference key="2">
    <citation type="journal article" date="2001" name="Philos. Trans. R. Soc. Lond., B, Biol. Sci.">
        <title>Plasmid-only rescue of influenza A virus vaccine candidates.</title>
        <authorList>
            <person name="Schickli J.H."/>
            <person name="Flandorfer A."/>
            <person name="Nakaya T."/>
            <person name="Martinez-Sobrido L."/>
            <person name="Garcia-Sastre A."/>
            <person name="Palese P."/>
        </authorList>
    </citation>
    <scope>NUCLEOTIDE SEQUENCE [GENOMIC RNA]</scope>
</reference>
<reference key="3">
    <citation type="journal article" date="2004" name="Virus Res.">
        <title>Efficient generation and growth of influenza virus A/PR/8/34 from eight cDNA fragments.</title>
        <authorList>
            <person name="de Wit E."/>
            <person name="Spronken M.I.J."/>
            <person name="Bestebroer T.M."/>
            <person name="Rimmelzwaan G.F."/>
            <person name="Osterhaus A.D.M.E."/>
            <person name="Fouchier R.A.M."/>
        </authorList>
    </citation>
    <scope>NUCLEOTIDE SEQUENCE [GENOMIC RNA]</scope>
    <scope>REVERSE GENETICS</scope>
</reference>
<reference key="4">
    <citation type="submission" date="2006-03" db="EMBL/GenBank/DDBJ databases">
        <title>The NIAID influenza genome sequencing project.</title>
        <authorList>
            <person name="Ghedin E."/>
            <person name="Spiro D."/>
            <person name="Miller N."/>
            <person name="Zaborsky J."/>
            <person name="Feldblyum T."/>
            <person name="Subbu V."/>
            <person name="Shumway M."/>
            <person name="Sparenborg J."/>
            <person name="Groveman L."/>
            <person name="Halpin R."/>
            <person name="Sitz J."/>
            <person name="Koo H."/>
            <person name="Salzberg S.L."/>
            <person name="Webster R.G."/>
            <person name="Hoffmann E."/>
            <person name="Krauss S."/>
            <person name="Naeve C."/>
            <person name="Bao Y."/>
            <person name="Bolotov P."/>
            <person name="Dernovoy D."/>
            <person name="Kiryutin B."/>
            <person name="Lipman D.J."/>
            <person name="Tatusova T."/>
        </authorList>
    </citation>
    <scope>NUCLEOTIDE SEQUENCE [GENOMIC RNA]</scope>
</reference>
<reference key="5">
    <citation type="journal article" date="2003" name="Virology">
        <title>Intracellular warfare between human influenza viruses and human cells: the roles of the viral NS1 protein.</title>
        <authorList>
            <person name="Krug R.M."/>
            <person name="Yuan W."/>
            <person name="Noah D.L."/>
            <person name="Latham A.G."/>
        </authorList>
    </citation>
    <scope>REVIEW</scope>
</reference>
<reference key="6">
    <citation type="journal article" date="2009" name="Cell Host Microbe">
        <title>Influenza A virus NS1 targets the ubiquitin ligase TRIM25 to evade recognition by the host viral RNA sensor RIG-I.</title>
        <authorList>
            <person name="Gack M.U."/>
            <person name="Albrecht R.A."/>
            <person name="Urano T."/>
            <person name="Inn K.-S."/>
            <person name="Huang I.-C."/>
            <person name="Carnero E."/>
            <person name="Farzan M."/>
            <person name="Inoue S."/>
            <person name="Jung J.U."/>
            <person name="Garcia-Sastre A."/>
        </authorList>
    </citation>
    <scope>INTERACTION WITH HUMAN TRIM25</scope>
    <scope>MUTAGENESIS OF ARG-38; LYS-41; GLU-96 AND GLU-97</scope>
</reference>
<reference key="7">
    <citation type="journal article" date="2010" name="J. Immunol.">
        <title>Herc5 attenuates influenza A virus by catalyzing ISGylation of viral NS1 protein.</title>
        <authorList>
            <person name="Tang Y."/>
            <person name="Zhong G."/>
            <person name="Zhu L."/>
            <person name="Liu X."/>
            <person name="Shan Y."/>
            <person name="Feng H."/>
            <person name="Bu Z."/>
            <person name="Chen H."/>
            <person name="Wang C."/>
        </authorList>
    </citation>
    <scope>ISGYLATION AT LYS-20; LYS-41; LYS-108; LYS-110; LYS-126; LYS-217 AND LYS-219</scope>
    <scope>MUTAGENESIS OF LYS-20; LYS-41; LYS-108; LYS-110; LYS-126; LYS-217 AND LYS-219</scope>
</reference>
<reference key="8">
    <citation type="journal article" date="2021" name="J. Biol. Chem.">
        <title>DDX3X coordinates host defense against influenza virus by activating the NLRP3 inflammasome and type I interferon response.</title>
        <authorList>
            <person name="Kesavardhana S."/>
            <person name="Samir P."/>
            <person name="Zheng M."/>
            <person name="Malireddi R.K.S."/>
            <person name="Karki R."/>
            <person name="Sharma B.R."/>
            <person name="Place D.E."/>
            <person name="Briard B."/>
            <person name="Vogel P."/>
            <person name="Kanneganti T.D."/>
        </authorList>
    </citation>
    <scope>FUNCTION</scope>
</reference>
<organism>
    <name type="scientific">Influenza A virus (strain A/Puerto Rico/8/1934 H1N1)</name>
    <dbReference type="NCBI Taxonomy" id="211044"/>
    <lineage>
        <taxon>Viruses</taxon>
        <taxon>Riboviria</taxon>
        <taxon>Orthornavirae</taxon>
        <taxon>Negarnaviricota</taxon>
        <taxon>Polyploviricotina</taxon>
        <taxon>Insthoviricetes</taxon>
        <taxon>Articulavirales</taxon>
        <taxon>Orthomyxoviridae</taxon>
        <taxon>Alphainfluenzavirus</taxon>
        <taxon>Alphainfluenzavirus influenzae</taxon>
        <taxon>Influenza A virus</taxon>
    </lineage>
</organism>
<sequence>MDPNTVSSFQVDCFLWHVRKRVADQELGDAPFLDRLRRDQKSLRGRGSTLGLDIETATRAGKQIVERILKEESDEALKMTMASVPASRYLTDMTLEEMSRDWSMLIPKQKVAGPLCIRMDQAIMDKNIILKANFSVIFDRLETLILLRAFTEEGAIVGEISPLPSLPGHTAEDVKNAVGVLIGGLEWNDNTVRVSETLQRFAWRSSNENGRPPLTPKQKREMAGTIRSEV</sequence>
<keyword id="KW-0002">3D-structure</keyword>
<keyword id="KW-0025">Alternative splicing</keyword>
<keyword id="KW-1262">Eukaryotic host gene expression shutoff by virus</keyword>
<keyword id="KW-1035">Host cytoplasm</keyword>
<keyword id="KW-1190">Host gene expression shutoff by virus</keyword>
<keyword id="KW-1192">Host mRNA suppression by virus</keyword>
<keyword id="KW-1048">Host nucleus</keyword>
<keyword id="KW-0945">Host-virus interaction</keyword>
<keyword id="KW-1090">Inhibition of host innate immune response by virus</keyword>
<keyword id="KW-1114">Inhibition of host interferon signaling pathway by virus</keyword>
<keyword id="KW-1102">Inhibition of host PKR by virus</keyword>
<keyword id="KW-1103">Inhibition of host pre-mRNA processing by virus</keyword>
<keyword id="KW-1088">Inhibition of host RIG-I by virus</keyword>
<keyword id="KW-1113">Inhibition of host RLR pathway by virus</keyword>
<keyword id="KW-0922">Interferon antiviral system evasion</keyword>
<keyword id="KW-1017">Isopeptide bond</keyword>
<keyword id="KW-1185">Reference proteome</keyword>
<keyword id="KW-0694">RNA-binding</keyword>
<keyword id="KW-0832">Ubl conjugation</keyword>
<keyword id="KW-0899">Viral immunoevasion</keyword>
<feature type="chain" id="PRO_0000078945" description="Non-structural protein 1">
    <location>
        <begin position="1"/>
        <end position="230"/>
    </location>
</feature>
<feature type="region of interest" description="RNA-binding and homodimerization" evidence="1">
    <location>
        <begin position="1"/>
        <end position="73"/>
    </location>
</feature>
<feature type="region of interest" description="CPSF4-binding" evidence="1">
    <location>
        <begin position="180"/>
        <end position="215"/>
    </location>
</feature>
<feature type="region of interest" description="Disordered" evidence="2">
    <location>
        <begin position="205"/>
        <end position="230"/>
    </location>
</feature>
<feature type="region of interest" description="PABPN1-binding" evidence="1">
    <location>
        <begin position="223"/>
        <end position="230"/>
    </location>
</feature>
<feature type="short sequence motif" description="Nuclear localization signal" evidence="1">
    <location>
        <begin position="34"/>
        <end position="38"/>
    </location>
</feature>
<feature type="short sequence motif" description="Nuclear export signal" evidence="1">
    <location>
        <begin position="137"/>
        <end position="146"/>
    </location>
</feature>
<feature type="compositionally biased region" description="Basic and acidic residues" evidence="2">
    <location>
        <begin position="218"/>
        <end position="230"/>
    </location>
</feature>
<feature type="cross-link" description="Glycyl lysine isopeptide (Lys-Gly) (interchain with G-Cter in ISG15); in band I form; by host" evidence="4">
    <location>
        <position position="20"/>
    </location>
</feature>
<feature type="cross-link" description="Glycyl lysine isopeptide (Lys-Gly) (interchain with G-Cter in ISG15); in band I form; by host" evidence="4">
    <location>
        <position position="41"/>
    </location>
</feature>
<feature type="cross-link" description="Glycyl lysine isopeptide (Lys-Gly) (interchain with G-Cter in ISG15); in band II form; by host" evidence="4">
    <location>
        <position position="108"/>
    </location>
</feature>
<feature type="cross-link" description="Glycyl lysine isopeptide (Lys-Gly) (interchain with G-Cter in ISG15); in band II form; by host" evidence="4">
    <location>
        <position position="110"/>
    </location>
</feature>
<feature type="cross-link" description="Glycyl lysine isopeptide (Lys-Gly) (interchain with G-Cter in ISG15); in band II form; by host" evidence="4">
    <location>
        <position position="126"/>
    </location>
</feature>
<feature type="cross-link" description="Glycyl lysine isopeptide (Lys-Gly) (interchain with G-Cter in ISG15); in band I form; by host" evidence="4">
    <location>
        <position position="217"/>
    </location>
</feature>
<feature type="cross-link" description="Glycyl lysine isopeptide (Lys-Gly) (interchain with G-Cter in ISG15); in band I form; by host" evidence="4">
    <location>
        <position position="219"/>
    </location>
</feature>
<feature type="mutagenesis site" description="No of ISGylation of band I form; when associated with K-41; K-217 and K-219." evidence="4">
    <original>K</original>
    <variation>A</variation>
    <location>
        <position position="20"/>
    </location>
</feature>
<feature type="mutagenesis site" description="Complete loss of inhibition of RIGI CARD ubiquitination; when associated with A-41." evidence="3">
    <original>R</original>
    <variation>A</variation>
    <location>
        <position position="38"/>
    </location>
</feature>
<feature type="mutagenesis site" description="Complete loss of inhibition of RIGI CARD ubiquitination; when associated with A-38." evidence="3 4">
    <original>K</original>
    <variation>A</variation>
    <location>
        <position position="41"/>
    </location>
</feature>
<feature type="mutagenesis site" description="No of ISGylation of band I form; when associated with K-20; K-217 and K-219." evidence="3 4">
    <original>K</original>
    <variation>A</variation>
    <location>
        <position position="41"/>
    </location>
</feature>
<feature type="mutagenesis site" description="Complete loss of inhibition of RIGI CARD ubiquitination; when associated with A-97." evidence="3">
    <original>E</original>
    <variation>A</variation>
    <location>
        <position position="96"/>
    </location>
</feature>
<feature type="mutagenesis site" description="Complete loss of inhibition of RIGI CARD ubiquitination; when associated with A-96." evidence="3">
    <original>E</original>
    <variation>A</variation>
    <location>
        <position position="97"/>
    </location>
</feature>
<feature type="mutagenesis site" description="No of ISGylation of band II form; when associated with K-110 and K-126." evidence="4">
    <original>K</original>
    <variation>A</variation>
    <location>
        <position position="108"/>
    </location>
</feature>
<feature type="mutagenesis site" description="No of ISGylation of band II form; when associated with K-108 and K-126." evidence="4">
    <original>K</original>
    <variation>A</variation>
    <location>
        <position position="110"/>
    </location>
</feature>
<feature type="mutagenesis site" description="No of ISGylation of band II form; when associated with K-108 and K-110." evidence="4">
    <original>K</original>
    <variation>A</variation>
    <location>
        <position position="126"/>
    </location>
</feature>
<feature type="mutagenesis site" description="No of ISGylation of band I form; when associated with K-20; K-41 and K-219." evidence="4">
    <original>K</original>
    <variation>A</variation>
    <location>
        <position position="217"/>
    </location>
</feature>
<feature type="mutagenesis site" description="No of ISGylation of band I form; when associated with K-20; K-41 and K-217." evidence="4">
    <original>K</original>
    <variation>A</variation>
    <location>
        <position position="219"/>
    </location>
</feature>
<feature type="sequence conflict" description="In Ref. 4; ABD77680." ref="4">
    <original>E</original>
    <variation>K</variation>
    <location>
        <position position="55"/>
    </location>
</feature>
<feature type="sequence conflict" description="In Ref. 2; AAA43536." ref="2">
    <original>D</original>
    <variation>E</variation>
    <location>
        <position position="101"/>
    </location>
</feature>
<feature type="helix" evidence="6">
    <location>
        <begin position="3"/>
        <end position="24"/>
    </location>
</feature>
<feature type="helix" evidence="6">
    <location>
        <begin position="30"/>
        <end position="50"/>
    </location>
</feature>
<feature type="helix" evidence="6">
    <location>
        <begin position="54"/>
        <end position="69"/>
    </location>
</feature>
<feature type="strand" evidence="7">
    <location>
        <begin position="88"/>
        <end position="93"/>
    </location>
</feature>
<feature type="helix" evidence="7">
    <location>
        <begin position="95"/>
        <end position="99"/>
    </location>
</feature>
<feature type="strand" evidence="7">
    <location>
        <begin position="105"/>
        <end position="112"/>
    </location>
</feature>
<feature type="strand" evidence="7">
    <location>
        <begin position="115"/>
        <end position="120"/>
    </location>
</feature>
<feature type="strand" evidence="7">
    <location>
        <begin position="127"/>
        <end position="137"/>
    </location>
</feature>
<feature type="strand" evidence="7">
    <location>
        <begin position="140"/>
        <end position="151"/>
    </location>
</feature>
<feature type="strand" evidence="7">
    <location>
        <begin position="156"/>
        <end position="162"/>
    </location>
</feature>
<feature type="helix" evidence="7">
    <location>
        <begin position="171"/>
        <end position="187"/>
    </location>
</feature>
<feature type="strand" evidence="7">
    <location>
        <begin position="191"/>
        <end position="194"/>
    </location>
</feature>
<feature type="helix" evidence="7">
    <location>
        <begin position="196"/>
        <end position="201"/>
    </location>
</feature>
<dbReference type="EMBL" id="V01104">
    <property type="protein sequence ID" value="CAA24292.1"/>
    <property type="status" value="ALT_SEQ"/>
    <property type="molecule type" value="Genomic_RNA"/>
</dbReference>
<dbReference type="EMBL" id="J02150">
    <property type="protein sequence ID" value="AAA43536.1"/>
    <property type="molecule type" value="Genomic_RNA"/>
</dbReference>
<dbReference type="EMBL" id="AF389122">
    <property type="protein sequence ID" value="AAM75163.1"/>
    <property type="molecule type" value="Genomic_RNA"/>
</dbReference>
<dbReference type="EMBL" id="EF467817">
    <property type="protein sequence ID" value="ABO21703.1"/>
    <property type="molecule type" value="Genomic_RNA"/>
</dbReference>
<dbReference type="EMBL" id="CY009448">
    <property type="protein sequence ID" value="ABD77680.1"/>
    <property type="molecule type" value="Genomic_RNA"/>
</dbReference>
<dbReference type="PDB" id="2GX9">
    <property type="method" value="X-ray"/>
    <property type="resolution" value="2.10 A"/>
    <property type="chains" value="A/B=79-207"/>
</dbReference>
<dbReference type="PDB" id="2ZKO">
    <property type="method" value="X-ray"/>
    <property type="resolution" value="1.70 A"/>
    <property type="chains" value="A/B=1-70"/>
</dbReference>
<dbReference type="PDB" id="3L4Q">
    <property type="method" value="X-ray"/>
    <property type="resolution" value="2.30 A"/>
    <property type="chains" value="A/B=73-230"/>
</dbReference>
<dbReference type="PDB" id="3O9Q">
    <property type="method" value="X-ray"/>
    <property type="resolution" value="2.50 A"/>
    <property type="chains" value="A/B=79-230"/>
</dbReference>
<dbReference type="PDB" id="3O9R">
    <property type="method" value="X-ray"/>
    <property type="resolution" value="2.00 A"/>
    <property type="chains" value="A/B=79-230"/>
</dbReference>
<dbReference type="PDB" id="3O9S">
    <property type="method" value="X-ray"/>
    <property type="resolution" value="2.48 A"/>
    <property type="chains" value="A/B=79-230"/>
</dbReference>
<dbReference type="PDB" id="3O9T">
    <property type="method" value="X-ray"/>
    <property type="resolution" value="2.20 A"/>
    <property type="chains" value="A/B=79-230"/>
</dbReference>
<dbReference type="PDB" id="3O9U">
    <property type="method" value="X-ray"/>
    <property type="resolution" value="3.20 A"/>
    <property type="chains" value="A/B/C/D/E/F/G/H=79-230"/>
</dbReference>
<dbReference type="PDB" id="3RVC">
    <property type="method" value="X-ray"/>
    <property type="resolution" value="1.80 A"/>
    <property type="chains" value="A=79-230"/>
</dbReference>
<dbReference type="PDB" id="5NT1">
    <property type="method" value="X-ray"/>
    <property type="resolution" value="2.82 A"/>
    <property type="chains" value="B/F/J=80-230"/>
</dbReference>
<dbReference type="PDB" id="5NT2">
    <property type="method" value="X-ray"/>
    <property type="resolution" value="4.26 A"/>
    <property type="chains" value="C/D/E/F=1-230"/>
</dbReference>
<dbReference type="PDBsum" id="2GX9"/>
<dbReference type="PDBsum" id="2ZKO"/>
<dbReference type="PDBsum" id="3L4Q"/>
<dbReference type="PDBsum" id="3O9Q"/>
<dbReference type="PDBsum" id="3O9R"/>
<dbReference type="PDBsum" id="3O9S"/>
<dbReference type="PDBsum" id="3O9T"/>
<dbReference type="PDBsum" id="3O9U"/>
<dbReference type="PDBsum" id="3RVC"/>
<dbReference type="PDBsum" id="5NT1"/>
<dbReference type="PDBsum" id="5NT2"/>
<dbReference type="SMR" id="P03496"/>
<dbReference type="DIP" id="DIP-29081N"/>
<dbReference type="IntAct" id="P03496">
    <property type="interactions" value="222"/>
</dbReference>
<dbReference type="MINT" id="P03496"/>
<dbReference type="ChEMBL" id="CHEMBL4523164"/>
<dbReference type="KEGG" id="vg:956533"/>
<dbReference type="OrthoDB" id="8721at10239"/>
<dbReference type="Reactome" id="R-HSA-1169408">
    <property type="pathway name" value="ISG15 antiviral mechanism"/>
</dbReference>
<dbReference type="Reactome" id="R-HSA-168276">
    <property type="pathway name" value="NS1 Mediated Effects on Host Pathways"/>
</dbReference>
<dbReference type="Reactome" id="R-HSA-168315">
    <property type="pathway name" value="Inhibition of Host mRNA Processing and RNA Silencing"/>
</dbReference>
<dbReference type="Reactome" id="R-HSA-168888">
    <property type="pathway name" value="Inhibition of IFN-beta"/>
</dbReference>
<dbReference type="Reactome" id="R-HSA-169131">
    <property type="pathway name" value="Inhibition of PKR"/>
</dbReference>
<dbReference type="Reactome" id="R-HSA-192823">
    <property type="pathway name" value="Viral mRNA Translation"/>
</dbReference>
<dbReference type="Reactome" id="R-HSA-5213460">
    <property type="pathway name" value="RIPK1-mediated regulated necrosis"/>
</dbReference>
<dbReference type="Reactome" id="R-HSA-9686347">
    <property type="pathway name" value="Microbial modulation of RIPK1-mediated regulated necrosis"/>
</dbReference>
<dbReference type="Reactome" id="R-HSA-9833482">
    <property type="pathway name" value="PKR-mediated signaling"/>
</dbReference>
<dbReference type="EvolutionaryTrace" id="P03496"/>
<dbReference type="Proteomes" id="UP000009255">
    <property type="component" value="Genome"/>
</dbReference>
<dbReference type="Proteomes" id="UP000116373">
    <property type="component" value="Genome"/>
</dbReference>
<dbReference type="Proteomes" id="UP000170967">
    <property type="component" value="Genome"/>
</dbReference>
<dbReference type="GO" id="GO:0030430">
    <property type="term" value="C:host cell cytoplasm"/>
    <property type="evidence" value="ECO:0007669"/>
    <property type="project" value="UniProtKB-SubCell"/>
</dbReference>
<dbReference type="GO" id="GO:0042025">
    <property type="term" value="C:host cell nucleus"/>
    <property type="evidence" value="ECO:0007669"/>
    <property type="project" value="UniProtKB-SubCell"/>
</dbReference>
<dbReference type="GO" id="GO:0042802">
    <property type="term" value="F:identical protein binding"/>
    <property type="evidence" value="ECO:0000353"/>
    <property type="project" value="IntAct"/>
</dbReference>
<dbReference type="GO" id="GO:0030291">
    <property type="term" value="F:protein serine/threonine kinase inhibitor activity"/>
    <property type="evidence" value="ECO:0007669"/>
    <property type="project" value="UniProtKB-KW"/>
</dbReference>
<dbReference type="GO" id="GO:0003723">
    <property type="term" value="F:RNA binding"/>
    <property type="evidence" value="ECO:0007669"/>
    <property type="project" value="UniProtKB-KW"/>
</dbReference>
<dbReference type="GO" id="GO:0039540">
    <property type="term" value="P:symbiont-mediated suppression of host cytoplasmic pattern recognition receptor signaling pathway via inhibition of RIG-I activity"/>
    <property type="evidence" value="ECO:0007669"/>
    <property type="project" value="UniProtKB-KW"/>
</dbReference>
<dbReference type="GO" id="GO:0039657">
    <property type="term" value="P:symbiont-mediated suppression of host gene expression"/>
    <property type="evidence" value="ECO:0007669"/>
    <property type="project" value="UniProtKB-KW"/>
</dbReference>
<dbReference type="GO" id="GO:0039524">
    <property type="term" value="P:symbiont-mediated suppression of host mRNA processing"/>
    <property type="evidence" value="ECO:0007669"/>
    <property type="project" value="UniProtKB-KW"/>
</dbReference>
<dbReference type="GO" id="GO:0039580">
    <property type="term" value="P:symbiont-mediated suppression of host PKR/eIFalpha signaling"/>
    <property type="evidence" value="ECO:0007669"/>
    <property type="project" value="UniProtKB-KW"/>
</dbReference>
<dbReference type="GO" id="GO:0039502">
    <property type="term" value="P:symbiont-mediated suppression of host type I interferon-mediated signaling pathway"/>
    <property type="evidence" value="ECO:0007669"/>
    <property type="project" value="UniProtKB-KW"/>
</dbReference>
<dbReference type="FunFam" id="1.10.287.10:FF:000001">
    <property type="entry name" value="Non-structural protein 1"/>
    <property type="match status" value="1"/>
</dbReference>
<dbReference type="FunFam" id="3.30.420.330:FF:000001">
    <property type="entry name" value="Non-structural protein 1"/>
    <property type="match status" value="1"/>
</dbReference>
<dbReference type="Gene3D" id="3.30.420.330">
    <property type="entry name" value="Influenza virus non-structural protein, effector domain"/>
    <property type="match status" value="1"/>
</dbReference>
<dbReference type="Gene3D" id="1.10.287.10">
    <property type="entry name" value="S15/NS1, RNA-binding"/>
    <property type="match status" value="1"/>
</dbReference>
<dbReference type="HAMAP" id="MF_04066">
    <property type="entry name" value="INFV_NS1"/>
    <property type="match status" value="1"/>
</dbReference>
<dbReference type="InterPro" id="IPR004208">
    <property type="entry name" value="NS1"/>
</dbReference>
<dbReference type="InterPro" id="IPR000256">
    <property type="entry name" value="NS1A"/>
</dbReference>
<dbReference type="InterPro" id="IPR038064">
    <property type="entry name" value="NS1A_effect_dom-like_sf"/>
</dbReference>
<dbReference type="InterPro" id="IPR009068">
    <property type="entry name" value="uS15_NS1_RNA-bd_sf"/>
</dbReference>
<dbReference type="Pfam" id="PF00600">
    <property type="entry name" value="Flu_NS1"/>
    <property type="match status" value="1"/>
</dbReference>
<dbReference type="SUPFAM" id="SSF143021">
    <property type="entry name" value="Ns1 effector domain-like"/>
    <property type="match status" value="1"/>
</dbReference>
<dbReference type="SUPFAM" id="SSF47060">
    <property type="entry name" value="S15/NS1 RNA-binding domain"/>
    <property type="match status" value="1"/>
</dbReference>
<name>NS1_I34A1</name>
<organismHost>
    <name type="scientific">Aves</name>
    <dbReference type="NCBI Taxonomy" id="8782"/>
</organismHost>
<organismHost>
    <name type="scientific">Homo sapiens</name>
    <name type="common">Human</name>
    <dbReference type="NCBI Taxonomy" id="9606"/>
</organismHost>
<organismHost>
    <name type="scientific">Sus scrofa</name>
    <name type="common">Pig</name>
    <dbReference type="NCBI Taxonomy" id="9823"/>
</organismHost>
<accession>P03496</accession>
<accession>Q20N32</accession>
<accession>Q67267</accession>
<accession>Q71QT3</accession>
<gene>
    <name evidence="1" type="primary">NS</name>
</gene>